<dbReference type="EC" id="2.8.1.-" evidence="1"/>
<dbReference type="EMBL" id="BX936398">
    <property type="protein sequence ID" value="CAH21492.1"/>
    <property type="molecule type" value="Genomic_DNA"/>
</dbReference>
<dbReference type="RefSeq" id="WP_011192516.1">
    <property type="nucleotide sequence ID" value="NC_006155.1"/>
</dbReference>
<dbReference type="SMR" id="Q66A78"/>
<dbReference type="GeneID" id="49785749"/>
<dbReference type="KEGG" id="ypo:BZ17_208"/>
<dbReference type="KEGG" id="yps:YPTB2254"/>
<dbReference type="PATRIC" id="fig|273123.14.peg.215"/>
<dbReference type="Proteomes" id="UP000001011">
    <property type="component" value="Chromosome"/>
</dbReference>
<dbReference type="GO" id="GO:0005737">
    <property type="term" value="C:cytoplasm"/>
    <property type="evidence" value="ECO:0007669"/>
    <property type="project" value="UniProtKB-SubCell"/>
</dbReference>
<dbReference type="GO" id="GO:0051539">
    <property type="term" value="F:4 iron, 4 sulfur cluster binding"/>
    <property type="evidence" value="ECO:0007669"/>
    <property type="project" value="UniProtKB-UniRule"/>
</dbReference>
<dbReference type="GO" id="GO:0005524">
    <property type="term" value="F:ATP binding"/>
    <property type="evidence" value="ECO:0007669"/>
    <property type="project" value="UniProtKB-UniRule"/>
</dbReference>
<dbReference type="GO" id="GO:0000287">
    <property type="term" value="F:magnesium ion binding"/>
    <property type="evidence" value="ECO:0007669"/>
    <property type="project" value="UniProtKB-UniRule"/>
</dbReference>
<dbReference type="GO" id="GO:0016783">
    <property type="term" value="F:sulfurtransferase activity"/>
    <property type="evidence" value="ECO:0007669"/>
    <property type="project" value="UniProtKB-UniRule"/>
</dbReference>
<dbReference type="GO" id="GO:0000049">
    <property type="term" value="F:tRNA binding"/>
    <property type="evidence" value="ECO:0007669"/>
    <property type="project" value="UniProtKB-KW"/>
</dbReference>
<dbReference type="GO" id="GO:0034227">
    <property type="term" value="P:tRNA thio-modification"/>
    <property type="evidence" value="ECO:0007669"/>
    <property type="project" value="UniProtKB-UniRule"/>
</dbReference>
<dbReference type="CDD" id="cd24138">
    <property type="entry name" value="TtcA-like"/>
    <property type="match status" value="1"/>
</dbReference>
<dbReference type="Gene3D" id="3.40.50.620">
    <property type="entry name" value="HUPs"/>
    <property type="match status" value="1"/>
</dbReference>
<dbReference type="HAMAP" id="MF_01850">
    <property type="entry name" value="TtcA"/>
    <property type="match status" value="1"/>
</dbReference>
<dbReference type="InterPro" id="IPR014729">
    <property type="entry name" value="Rossmann-like_a/b/a_fold"/>
</dbReference>
<dbReference type="InterPro" id="IPR011063">
    <property type="entry name" value="TilS/TtcA_N"/>
</dbReference>
<dbReference type="InterPro" id="IPR012089">
    <property type="entry name" value="tRNA_Cyd_32_2_STrfase"/>
</dbReference>
<dbReference type="InterPro" id="IPR035107">
    <property type="entry name" value="tRNA_thiolation_TtcA_Ctu1"/>
</dbReference>
<dbReference type="NCBIfam" id="NF007972">
    <property type="entry name" value="PRK10696.1"/>
    <property type="match status" value="1"/>
</dbReference>
<dbReference type="PANTHER" id="PTHR43686:SF1">
    <property type="entry name" value="AMINOTRAN_5 DOMAIN-CONTAINING PROTEIN"/>
    <property type="match status" value="1"/>
</dbReference>
<dbReference type="PANTHER" id="PTHR43686">
    <property type="entry name" value="SULFURTRANSFERASE-RELATED"/>
    <property type="match status" value="1"/>
</dbReference>
<dbReference type="Pfam" id="PF01171">
    <property type="entry name" value="ATP_bind_3"/>
    <property type="match status" value="1"/>
</dbReference>
<dbReference type="PIRSF" id="PIRSF004976">
    <property type="entry name" value="ATPase_YdaO"/>
    <property type="match status" value="1"/>
</dbReference>
<dbReference type="SUPFAM" id="SSF52402">
    <property type="entry name" value="Adenine nucleotide alpha hydrolases-like"/>
    <property type="match status" value="1"/>
</dbReference>
<comment type="function">
    <text evidence="1">Catalyzes the ATP-dependent 2-thiolation of cytidine in position 32 of tRNA, to form 2-thiocytidine (s(2)C32). The sulfur atoms are provided by the cysteine/cysteine desulfurase (IscS) system.</text>
</comment>
<comment type="catalytic activity">
    <reaction evidence="1">
        <text>cytidine(32) in tRNA + S-sulfanyl-L-cysteinyl-[cysteine desulfurase] + AH2 + ATP = 2-thiocytidine(32) in tRNA + L-cysteinyl-[cysteine desulfurase] + A + AMP + diphosphate + H(+)</text>
        <dbReference type="Rhea" id="RHEA:57048"/>
        <dbReference type="Rhea" id="RHEA-COMP:10288"/>
        <dbReference type="Rhea" id="RHEA-COMP:12157"/>
        <dbReference type="Rhea" id="RHEA-COMP:12158"/>
        <dbReference type="Rhea" id="RHEA-COMP:14821"/>
        <dbReference type="ChEBI" id="CHEBI:13193"/>
        <dbReference type="ChEBI" id="CHEBI:15378"/>
        <dbReference type="ChEBI" id="CHEBI:17499"/>
        <dbReference type="ChEBI" id="CHEBI:29950"/>
        <dbReference type="ChEBI" id="CHEBI:30616"/>
        <dbReference type="ChEBI" id="CHEBI:33019"/>
        <dbReference type="ChEBI" id="CHEBI:61963"/>
        <dbReference type="ChEBI" id="CHEBI:82748"/>
        <dbReference type="ChEBI" id="CHEBI:141453"/>
        <dbReference type="ChEBI" id="CHEBI:456215"/>
    </reaction>
    <physiologicalReaction direction="left-to-right" evidence="1">
        <dbReference type="Rhea" id="RHEA:57049"/>
    </physiologicalReaction>
</comment>
<comment type="cofactor">
    <cofactor evidence="1">
        <name>Mg(2+)</name>
        <dbReference type="ChEBI" id="CHEBI:18420"/>
    </cofactor>
</comment>
<comment type="cofactor">
    <cofactor evidence="1">
        <name>[4Fe-4S] cluster</name>
        <dbReference type="ChEBI" id="CHEBI:49883"/>
    </cofactor>
    <text evidence="1">Binds 1 [4Fe-4S] cluster per subunit. The cluster is chelated by three Cys residues, the fourth Fe has a free coordination site that may bind a sulfur atom transferred from the persulfide of IscS.</text>
</comment>
<comment type="pathway">
    <text evidence="1">tRNA modification.</text>
</comment>
<comment type="subunit">
    <text evidence="1">Homodimer.</text>
</comment>
<comment type="subcellular location">
    <subcellularLocation>
        <location evidence="1">Cytoplasm</location>
    </subcellularLocation>
</comment>
<comment type="miscellaneous">
    <text evidence="1">The thiolation reaction likely consists of two steps: a first activation step by ATP to form an adenylated intermediate of the target base of tRNA, and a second nucleophilic substitution step of the sulfur (S) atom supplied by the hydrosulfide attached to the Fe-S cluster.</text>
</comment>
<comment type="similarity">
    <text evidence="1">Belongs to the TtcA family.</text>
</comment>
<gene>
    <name evidence="1" type="primary">ttcA</name>
    <name type="ordered locus">YPTB2254</name>
</gene>
<keyword id="KW-0004">4Fe-4S</keyword>
<keyword id="KW-0067">ATP-binding</keyword>
<keyword id="KW-0963">Cytoplasm</keyword>
<keyword id="KW-0408">Iron</keyword>
<keyword id="KW-0411">Iron-sulfur</keyword>
<keyword id="KW-0460">Magnesium</keyword>
<keyword id="KW-0479">Metal-binding</keyword>
<keyword id="KW-0547">Nucleotide-binding</keyword>
<keyword id="KW-0694">RNA-binding</keyword>
<keyword id="KW-0808">Transferase</keyword>
<keyword id="KW-0819">tRNA processing</keyword>
<keyword id="KW-0820">tRNA-binding</keyword>
<feature type="chain" id="PRO_0000348886" description="tRNA-cytidine(32) 2-sulfurtransferase">
    <location>
        <begin position="1"/>
        <end position="313"/>
    </location>
</feature>
<feature type="short sequence motif" description="PP-loop motif" evidence="1">
    <location>
        <begin position="47"/>
        <end position="52"/>
    </location>
</feature>
<feature type="binding site" evidence="1">
    <location>
        <position position="122"/>
    </location>
    <ligand>
        <name>[4Fe-4S] cluster</name>
        <dbReference type="ChEBI" id="CHEBI:49883"/>
    </ligand>
</feature>
<feature type="binding site" evidence="1">
    <location>
        <position position="125"/>
    </location>
    <ligand>
        <name>[4Fe-4S] cluster</name>
        <dbReference type="ChEBI" id="CHEBI:49883"/>
    </ligand>
</feature>
<feature type="binding site" evidence="1">
    <location>
        <position position="213"/>
    </location>
    <ligand>
        <name>[4Fe-4S] cluster</name>
        <dbReference type="ChEBI" id="CHEBI:49883"/>
    </ligand>
</feature>
<accession>Q66A78</accession>
<protein>
    <recommendedName>
        <fullName evidence="1">tRNA-cytidine(32) 2-sulfurtransferase</fullName>
        <ecNumber evidence="1">2.8.1.-</ecNumber>
    </recommendedName>
    <alternativeName>
        <fullName evidence="1">Two-thiocytidine biosynthesis protein A</fullName>
    </alternativeName>
    <alternativeName>
        <fullName evidence="1">tRNA 2-thiocytidine biosynthesis protein TtcA</fullName>
    </alternativeName>
</protein>
<reference key="1">
    <citation type="journal article" date="2004" name="Proc. Natl. Acad. Sci. U.S.A.">
        <title>Insights into the evolution of Yersinia pestis through whole-genome comparison with Yersinia pseudotuberculosis.</title>
        <authorList>
            <person name="Chain P.S.G."/>
            <person name="Carniel E."/>
            <person name="Larimer F.W."/>
            <person name="Lamerdin J."/>
            <person name="Stoutland P.O."/>
            <person name="Regala W.M."/>
            <person name="Georgescu A.M."/>
            <person name="Vergez L.M."/>
            <person name="Land M.L."/>
            <person name="Motin V.L."/>
            <person name="Brubaker R.R."/>
            <person name="Fowler J."/>
            <person name="Hinnebusch J."/>
            <person name="Marceau M."/>
            <person name="Medigue C."/>
            <person name="Simonet M."/>
            <person name="Chenal-Francisque V."/>
            <person name="Souza B."/>
            <person name="Dacheux D."/>
            <person name="Elliott J.M."/>
            <person name="Derbise A."/>
            <person name="Hauser L.J."/>
            <person name="Garcia E."/>
        </authorList>
    </citation>
    <scope>NUCLEOTIDE SEQUENCE [LARGE SCALE GENOMIC DNA]</scope>
    <source>
        <strain>IP32953</strain>
    </source>
</reference>
<organism>
    <name type="scientific">Yersinia pseudotuberculosis serotype I (strain IP32953)</name>
    <dbReference type="NCBI Taxonomy" id="273123"/>
    <lineage>
        <taxon>Bacteria</taxon>
        <taxon>Pseudomonadati</taxon>
        <taxon>Pseudomonadota</taxon>
        <taxon>Gammaproteobacteria</taxon>
        <taxon>Enterobacterales</taxon>
        <taxon>Yersiniaceae</taxon>
        <taxon>Yersinia</taxon>
    </lineage>
</organism>
<evidence type="ECO:0000255" key="1">
    <source>
        <dbReference type="HAMAP-Rule" id="MF_01850"/>
    </source>
</evidence>
<proteinExistence type="inferred from homology"/>
<sequence>MLEKQSVNQKEQYNFNKLQKRLRRNVGQAIADFNMIEEGDRVMVCLSGGKDSYTMLDILQSLQKSAPINFSLIAVNLDQKQPGFPEDILPAYLDKQGVEYKIVEENTYGIVKEIIPDGKTTCSLCSRLRRGILYRTATELGATKIALGHHRDDILQTLFLNMFYGGKLKGMPPKLMSDDGKHIVIRPLAYCREKDIERFAVAREYPIIPCNLCGSQPNLQRQVIKDMLRDWDKQYPGRIETMFSAMQNVVPSHLNDHKLFDFKSITHDSDIIDGGDLAFDREALPLNPVGWQPEDDEDTEKRPSVRLDVLEIK</sequence>
<name>TTCA_YERPS</name>